<protein>
    <recommendedName>
        <fullName evidence="1">UPF0270 protein Pput_3967</fullName>
    </recommendedName>
</protein>
<evidence type="ECO:0000255" key="1">
    <source>
        <dbReference type="HAMAP-Rule" id="MF_00690"/>
    </source>
</evidence>
<accession>A5W7I1</accession>
<dbReference type="EMBL" id="CP000712">
    <property type="protein sequence ID" value="ABQ80091.1"/>
    <property type="molecule type" value="Genomic_DNA"/>
</dbReference>
<dbReference type="SMR" id="A5W7I1"/>
<dbReference type="KEGG" id="ppf:Pput_3967"/>
<dbReference type="eggNOG" id="COG3089">
    <property type="taxonomic scope" value="Bacteria"/>
</dbReference>
<dbReference type="HOGENOM" id="CLU_186759_2_0_6"/>
<dbReference type="Gene3D" id="1.10.10.610">
    <property type="entry name" value="YehU-like"/>
    <property type="match status" value="1"/>
</dbReference>
<dbReference type="HAMAP" id="MF_00690">
    <property type="entry name" value="UPF0270"/>
    <property type="match status" value="1"/>
</dbReference>
<dbReference type="InterPro" id="IPR010648">
    <property type="entry name" value="UPF0270"/>
</dbReference>
<dbReference type="InterPro" id="IPR036685">
    <property type="entry name" value="YehU-like_sf"/>
</dbReference>
<dbReference type="NCBIfam" id="NF001441">
    <property type="entry name" value="PRK00304.1"/>
    <property type="match status" value="1"/>
</dbReference>
<dbReference type="Pfam" id="PF06794">
    <property type="entry name" value="UPF0270"/>
    <property type="match status" value="1"/>
</dbReference>
<dbReference type="PIRSF" id="PIRSF006169">
    <property type="entry name" value="UCP006169"/>
    <property type="match status" value="1"/>
</dbReference>
<dbReference type="SUPFAM" id="SSF118001">
    <property type="entry name" value="YehU-like"/>
    <property type="match status" value="1"/>
</dbReference>
<proteinExistence type="inferred from homology"/>
<sequence length="75" mass="8613">MLIPYDQLQAETLTRLIEDFVTRDGTDNGDDTPLETRVLRVRQALAKGQAFILFDLESQQCQLLAKHDVPRELLE</sequence>
<gene>
    <name type="ordered locus">Pput_3967</name>
</gene>
<organism>
    <name type="scientific">Pseudomonas putida (strain ATCC 700007 / DSM 6899 / JCM 31910 / BCRC 17059 / LMG 24140 / F1)</name>
    <dbReference type="NCBI Taxonomy" id="351746"/>
    <lineage>
        <taxon>Bacteria</taxon>
        <taxon>Pseudomonadati</taxon>
        <taxon>Pseudomonadota</taxon>
        <taxon>Gammaproteobacteria</taxon>
        <taxon>Pseudomonadales</taxon>
        <taxon>Pseudomonadaceae</taxon>
        <taxon>Pseudomonas</taxon>
    </lineage>
</organism>
<reference key="1">
    <citation type="submission" date="2007-05" db="EMBL/GenBank/DDBJ databases">
        <title>Complete sequence of Pseudomonas putida F1.</title>
        <authorList>
            <consortium name="US DOE Joint Genome Institute"/>
            <person name="Copeland A."/>
            <person name="Lucas S."/>
            <person name="Lapidus A."/>
            <person name="Barry K."/>
            <person name="Detter J.C."/>
            <person name="Glavina del Rio T."/>
            <person name="Hammon N."/>
            <person name="Israni S."/>
            <person name="Dalin E."/>
            <person name="Tice H."/>
            <person name="Pitluck S."/>
            <person name="Chain P."/>
            <person name="Malfatti S."/>
            <person name="Shin M."/>
            <person name="Vergez L."/>
            <person name="Schmutz J."/>
            <person name="Larimer F."/>
            <person name="Land M."/>
            <person name="Hauser L."/>
            <person name="Kyrpides N."/>
            <person name="Lykidis A."/>
            <person name="Parales R."/>
            <person name="Richardson P."/>
        </authorList>
    </citation>
    <scope>NUCLEOTIDE SEQUENCE [LARGE SCALE GENOMIC DNA]</scope>
    <source>
        <strain>ATCC 700007 / DSM 6899 / JCM 31910 / BCRC 17059 / LMG 24140 / F1</strain>
    </source>
</reference>
<name>Y3967_PSEP1</name>
<feature type="chain" id="PRO_1000062016" description="UPF0270 protein Pput_3967">
    <location>
        <begin position="1"/>
        <end position="75"/>
    </location>
</feature>
<comment type="similarity">
    <text evidence="1">Belongs to the UPF0270 family.</text>
</comment>